<accession>B1YN53</accession>
<reference key="1">
    <citation type="submission" date="2008-04" db="EMBL/GenBank/DDBJ databases">
        <title>Complete sequence of chromosome 1 of Burkholderia ambifaria MC40-6.</title>
        <authorList>
            <person name="Copeland A."/>
            <person name="Lucas S."/>
            <person name="Lapidus A."/>
            <person name="Glavina del Rio T."/>
            <person name="Dalin E."/>
            <person name="Tice H."/>
            <person name="Pitluck S."/>
            <person name="Chain P."/>
            <person name="Malfatti S."/>
            <person name="Shin M."/>
            <person name="Vergez L."/>
            <person name="Lang D."/>
            <person name="Schmutz J."/>
            <person name="Larimer F."/>
            <person name="Land M."/>
            <person name="Hauser L."/>
            <person name="Kyrpides N."/>
            <person name="Lykidis A."/>
            <person name="Ramette A."/>
            <person name="Konstantinidis K."/>
            <person name="Tiedje J."/>
            <person name="Richardson P."/>
        </authorList>
    </citation>
    <scope>NUCLEOTIDE SEQUENCE [LARGE SCALE GENOMIC DNA]</scope>
    <source>
        <strain>MC40-6</strain>
    </source>
</reference>
<proteinExistence type="inferred from homology"/>
<organism>
    <name type="scientific">Burkholderia ambifaria (strain MC40-6)</name>
    <dbReference type="NCBI Taxonomy" id="398577"/>
    <lineage>
        <taxon>Bacteria</taxon>
        <taxon>Pseudomonadati</taxon>
        <taxon>Pseudomonadota</taxon>
        <taxon>Betaproteobacteria</taxon>
        <taxon>Burkholderiales</taxon>
        <taxon>Burkholderiaceae</taxon>
        <taxon>Burkholderia</taxon>
        <taxon>Burkholderia cepacia complex</taxon>
    </lineage>
</organism>
<keyword id="KW-0687">Ribonucleoprotein</keyword>
<keyword id="KW-0689">Ribosomal protein</keyword>
<keyword id="KW-0694">RNA-binding</keyword>
<keyword id="KW-0699">rRNA-binding</keyword>
<gene>
    <name evidence="1" type="primary">rplY</name>
    <name evidence="1" type="synonym">ctc</name>
    <name type="ordered locus">BamMC406_2721</name>
</gene>
<evidence type="ECO:0000255" key="1">
    <source>
        <dbReference type="HAMAP-Rule" id="MF_01334"/>
    </source>
</evidence>
<evidence type="ECO:0000305" key="2"/>
<protein>
    <recommendedName>
        <fullName evidence="1">Large ribosomal subunit protein bL25</fullName>
    </recommendedName>
    <alternativeName>
        <fullName evidence="2">50S ribosomal protein L25</fullName>
    </alternativeName>
    <alternativeName>
        <fullName evidence="1">General stress protein CTC</fullName>
    </alternativeName>
</protein>
<sequence>MKVVAFERQEQGTGASRRLRNAGKTTGIVYGGEAAPQKIELDHNALWHALKKEAFHSSILDLEVAGQSQQVLLRDVQYHPFKQLVLHVDFQRVDAKKKLHTKVPLHFLNAEVSPAVKLSSAVVSHVATEIEIECLPSALPEFLEVDLSKIEAGQSLHAKDIALPKGVALVAHIDAENPVVASATIPAGAVSDAAGEGETPAA</sequence>
<comment type="function">
    <text evidence="1">This is one of the proteins that binds to the 5S RNA in the ribosome where it forms part of the central protuberance.</text>
</comment>
<comment type="subunit">
    <text evidence="1">Part of the 50S ribosomal subunit; part of the 5S rRNA/L5/L18/L25 subcomplex. Contacts the 5S rRNA. Binds to the 5S rRNA independently of L5 and L18.</text>
</comment>
<comment type="similarity">
    <text evidence="1">Belongs to the bacterial ribosomal protein bL25 family. CTC subfamily.</text>
</comment>
<dbReference type="EMBL" id="CP001025">
    <property type="protein sequence ID" value="ACB65198.1"/>
    <property type="molecule type" value="Genomic_DNA"/>
</dbReference>
<dbReference type="RefSeq" id="WP_006753282.1">
    <property type="nucleotide sequence ID" value="NC_010551.1"/>
</dbReference>
<dbReference type="SMR" id="B1YN53"/>
<dbReference type="KEGG" id="bac:BamMC406_2721"/>
<dbReference type="HOGENOM" id="CLU_075939_0_1_4"/>
<dbReference type="OrthoDB" id="9806411at2"/>
<dbReference type="Proteomes" id="UP000001680">
    <property type="component" value="Chromosome 1"/>
</dbReference>
<dbReference type="GO" id="GO:0022625">
    <property type="term" value="C:cytosolic large ribosomal subunit"/>
    <property type="evidence" value="ECO:0007669"/>
    <property type="project" value="TreeGrafter"/>
</dbReference>
<dbReference type="GO" id="GO:0008097">
    <property type="term" value="F:5S rRNA binding"/>
    <property type="evidence" value="ECO:0007669"/>
    <property type="project" value="InterPro"/>
</dbReference>
<dbReference type="GO" id="GO:0003735">
    <property type="term" value="F:structural constituent of ribosome"/>
    <property type="evidence" value="ECO:0007669"/>
    <property type="project" value="InterPro"/>
</dbReference>
<dbReference type="GO" id="GO:0006412">
    <property type="term" value="P:translation"/>
    <property type="evidence" value="ECO:0007669"/>
    <property type="project" value="UniProtKB-UniRule"/>
</dbReference>
<dbReference type="CDD" id="cd00495">
    <property type="entry name" value="Ribosomal_L25_TL5_CTC"/>
    <property type="match status" value="1"/>
</dbReference>
<dbReference type="Gene3D" id="2.170.120.20">
    <property type="entry name" value="Ribosomal protein L25, beta domain"/>
    <property type="match status" value="1"/>
</dbReference>
<dbReference type="Gene3D" id="2.40.240.10">
    <property type="entry name" value="Ribosomal Protein L25, Chain P"/>
    <property type="match status" value="1"/>
</dbReference>
<dbReference type="HAMAP" id="MF_01336">
    <property type="entry name" value="Ribosomal_bL25"/>
    <property type="match status" value="1"/>
</dbReference>
<dbReference type="HAMAP" id="MF_01334">
    <property type="entry name" value="Ribosomal_bL25_CTC"/>
    <property type="match status" value="1"/>
</dbReference>
<dbReference type="InterPro" id="IPR020056">
    <property type="entry name" value="Rbsml_bL25/Gln-tRNA_synth_N"/>
</dbReference>
<dbReference type="InterPro" id="IPR011035">
    <property type="entry name" value="Ribosomal_bL25/Gln-tRNA_synth"/>
</dbReference>
<dbReference type="InterPro" id="IPR020057">
    <property type="entry name" value="Ribosomal_bL25_b-dom"/>
</dbReference>
<dbReference type="InterPro" id="IPR037121">
    <property type="entry name" value="Ribosomal_bL25_C"/>
</dbReference>
<dbReference type="InterPro" id="IPR001021">
    <property type="entry name" value="Ribosomal_bL25_long"/>
</dbReference>
<dbReference type="InterPro" id="IPR020055">
    <property type="entry name" value="Ribosomal_bL25_short"/>
</dbReference>
<dbReference type="InterPro" id="IPR029751">
    <property type="entry name" value="Ribosomal_L25_dom"/>
</dbReference>
<dbReference type="InterPro" id="IPR020930">
    <property type="entry name" value="Ribosomal_uL5_bac-type"/>
</dbReference>
<dbReference type="NCBIfam" id="TIGR00731">
    <property type="entry name" value="bL25_bact_ctc"/>
    <property type="match status" value="1"/>
</dbReference>
<dbReference type="NCBIfam" id="NF004128">
    <property type="entry name" value="PRK05618.1-2"/>
    <property type="match status" value="1"/>
</dbReference>
<dbReference type="NCBIfam" id="NF004130">
    <property type="entry name" value="PRK05618.1-5"/>
    <property type="match status" value="1"/>
</dbReference>
<dbReference type="NCBIfam" id="NF004612">
    <property type="entry name" value="PRK05943.1"/>
    <property type="match status" value="1"/>
</dbReference>
<dbReference type="PANTHER" id="PTHR33284">
    <property type="entry name" value="RIBOSOMAL PROTEIN L25/GLN-TRNA SYNTHETASE, ANTI-CODON-BINDING DOMAIN-CONTAINING PROTEIN"/>
    <property type="match status" value="1"/>
</dbReference>
<dbReference type="PANTHER" id="PTHR33284:SF1">
    <property type="entry name" value="RIBOSOMAL PROTEIN L25_GLN-TRNA SYNTHETASE, ANTI-CODON-BINDING DOMAIN-CONTAINING PROTEIN"/>
    <property type="match status" value="1"/>
</dbReference>
<dbReference type="Pfam" id="PF01386">
    <property type="entry name" value="Ribosomal_L25p"/>
    <property type="match status" value="1"/>
</dbReference>
<dbReference type="Pfam" id="PF14693">
    <property type="entry name" value="Ribosomal_TL5_C"/>
    <property type="match status" value="1"/>
</dbReference>
<dbReference type="SUPFAM" id="SSF50715">
    <property type="entry name" value="Ribosomal protein L25-like"/>
    <property type="match status" value="1"/>
</dbReference>
<feature type="chain" id="PRO_1000142495" description="Large ribosomal subunit protein bL25">
    <location>
        <begin position="1"/>
        <end position="202"/>
    </location>
</feature>
<name>RL25_BURA4</name>